<proteinExistence type="inferred from homology"/>
<dbReference type="EC" id="2.7.7.23" evidence="1"/>
<dbReference type="EC" id="2.3.1.157" evidence="1"/>
<dbReference type="EMBL" id="CP000783">
    <property type="protein sequence ID" value="ABU79188.1"/>
    <property type="status" value="ALT_INIT"/>
    <property type="molecule type" value="Genomic_DNA"/>
</dbReference>
<dbReference type="RefSeq" id="WP_041460645.1">
    <property type="nucleotide sequence ID" value="NC_009778.1"/>
</dbReference>
<dbReference type="SMR" id="A7MMY0"/>
<dbReference type="KEGG" id="esa:ESA_04002"/>
<dbReference type="PATRIC" id="fig|290339.8.peg.3552"/>
<dbReference type="HOGENOM" id="CLU_029499_15_2_6"/>
<dbReference type="UniPathway" id="UPA00113">
    <property type="reaction ID" value="UER00532"/>
</dbReference>
<dbReference type="UniPathway" id="UPA00113">
    <property type="reaction ID" value="UER00533"/>
</dbReference>
<dbReference type="UniPathway" id="UPA00973"/>
<dbReference type="Proteomes" id="UP000000260">
    <property type="component" value="Chromosome"/>
</dbReference>
<dbReference type="GO" id="GO:0005737">
    <property type="term" value="C:cytoplasm"/>
    <property type="evidence" value="ECO:0007669"/>
    <property type="project" value="UniProtKB-SubCell"/>
</dbReference>
<dbReference type="GO" id="GO:0016020">
    <property type="term" value="C:membrane"/>
    <property type="evidence" value="ECO:0007669"/>
    <property type="project" value="GOC"/>
</dbReference>
<dbReference type="GO" id="GO:0019134">
    <property type="term" value="F:glucosamine-1-phosphate N-acetyltransferase activity"/>
    <property type="evidence" value="ECO:0007669"/>
    <property type="project" value="UniProtKB-UniRule"/>
</dbReference>
<dbReference type="GO" id="GO:0000287">
    <property type="term" value="F:magnesium ion binding"/>
    <property type="evidence" value="ECO:0007669"/>
    <property type="project" value="UniProtKB-UniRule"/>
</dbReference>
<dbReference type="GO" id="GO:0003977">
    <property type="term" value="F:UDP-N-acetylglucosamine diphosphorylase activity"/>
    <property type="evidence" value="ECO:0007669"/>
    <property type="project" value="UniProtKB-UniRule"/>
</dbReference>
<dbReference type="GO" id="GO:0000902">
    <property type="term" value="P:cell morphogenesis"/>
    <property type="evidence" value="ECO:0007669"/>
    <property type="project" value="UniProtKB-UniRule"/>
</dbReference>
<dbReference type="GO" id="GO:0071555">
    <property type="term" value="P:cell wall organization"/>
    <property type="evidence" value="ECO:0007669"/>
    <property type="project" value="UniProtKB-KW"/>
</dbReference>
<dbReference type="GO" id="GO:0009245">
    <property type="term" value="P:lipid A biosynthetic process"/>
    <property type="evidence" value="ECO:0007669"/>
    <property type="project" value="UniProtKB-UniRule"/>
</dbReference>
<dbReference type="GO" id="GO:0009252">
    <property type="term" value="P:peptidoglycan biosynthetic process"/>
    <property type="evidence" value="ECO:0007669"/>
    <property type="project" value="UniProtKB-UniRule"/>
</dbReference>
<dbReference type="GO" id="GO:0008360">
    <property type="term" value="P:regulation of cell shape"/>
    <property type="evidence" value="ECO:0007669"/>
    <property type="project" value="UniProtKB-KW"/>
</dbReference>
<dbReference type="GO" id="GO:0006048">
    <property type="term" value="P:UDP-N-acetylglucosamine biosynthetic process"/>
    <property type="evidence" value="ECO:0007669"/>
    <property type="project" value="UniProtKB-UniPathway"/>
</dbReference>
<dbReference type="CDD" id="cd02540">
    <property type="entry name" value="GT2_GlmU_N_bac"/>
    <property type="match status" value="1"/>
</dbReference>
<dbReference type="CDD" id="cd03353">
    <property type="entry name" value="LbH_GlmU_C"/>
    <property type="match status" value="1"/>
</dbReference>
<dbReference type="FunFam" id="2.160.10.10:FF:000011">
    <property type="entry name" value="Bifunctional protein GlmU"/>
    <property type="match status" value="1"/>
</dbReference>
<dbReference type="FunFam" id="3.90.550.10:FF:000006">
    <property type="entry name" value="Bifunctional protein GlmU"/>
    <property type="match status" value="1"/>
</dbReference>
<dbReference type="Gene3D" id="2.160.10.10">
    <property type="entry name" value="Hexapeptide repeat proteins"/>
    <property type="match status" value="1"/>
</dbReference>
<dbReference type="Gene3D" id="3.90.550.10">
    <property type="entry name" value="Spore Coat Polysaccharide Biosynthesis Protein SpsA, Chain A"/>
    <property type="match status" value="1"/>
</dbReference>
<dbReference type="HAMAP" id="MF_01631">
    <property type="entry name" value="GlmU"/>
    <property type="match status" value="1"/>
</dbReference>
<dbReference type="InterPro" id="IPR005882">
    <property type="entry name" value="Bifunctional_GlmU"/>
</dbReference>
<dbReference type="InterPro" id="IPR050065">
    <property type="entry name" value="GlmU-like"/>
</dbReference>
<dbReference type="InterPro" id="IPR038009">
    <property type="entry name" value="GlmU_C_LbH"/>
</dbReference>
<dbReference type="InterPro" id="IPR001451">
    <property type="entry name" value="Hexapep"/>
</dbReference>
<dbReference type="InterPro" id="IPR018357">
    <property type="entry name" value="Hexapep_transf_CS"/>
</dbReference>
<dbReference type="InterPro" id="IPR025877">
    <property type="entry name" value="MobA-like_NTP_Trfase"/>
</dbReference>
<dbReference type="InterPro" id="IPR029044">
    <property type="entry name" value="Nucleotide-diphossugar_trans"/>
</dbReference>
<dbReference type="InterPro" id="IPR011004">
    <property type="entry name" value="Trimer_LpxA-like_sf"/>
</dbReference>
<dbReference type="NCBIfam" id="TIGR01173">
    <property type="entry name" value="glmU"/>
    <property type="match status" value="1"/>
</dbReference>
<dbReference type="NCBIfam" id="NF006986">
    <property type="entry name" value="PRK09451.1"/>
    <property type="match status" value="1"/>
</dbReference>
<dbReference type="PANTHER" id="PTHR43584:SF3">
    <property type="entry name" value="BIFUNCTIONAL PROTEIN GLMU"/>
    <property type="match status" value="1"/>
</dbReference>
<dbReference type="PANTHER" id="PTHR43584">
    <property type="entry name" value="NUCLEOTIDYL TRANSFERASE"/>
    <property type="match status" value="1"/>
</dbReference>
<dbReference type="Pfam" id="PF00132">
    <property type="entry name" value="Hexapep"/>
    <property type="match status" value="2"/>
</dbReference>
<dbReference type="Pfam" id="PF12804">
    <property type="entry name" value="NTP_transf_3"/>
    <property type="match status" value="1"/>
</dbReference>
<dbReference type="SUPFAM" id="SSF53448">
    <property type="entry name" value="Nucleotide-diphospho-sugar transferases"/>
    <property type="match status" value="1"/>
</dbReference>
<dbReference type="SUPFAM" id="SSF51161">
    <property type="entry name" value="Trimeric LpxA-like enzymes"/>
    <property type="match status" value="1"/>
</dbReference>
<dbReference type="PROSITE" id="PS00101">
    <property type="entry name" value="HEXAPEP_TRANSFERASES"/>
    <property type="match status" value="1"/>
</dbReference>
<accession>A7MMY0</accession>
<sequence>MSSHAMSVVILAAGKGTRMYSDLPKVLHTLAGKPMVQHVIDAAKHVGAQHIHLVYGHGGDLLQSTLKDASLNWVLQAEQLGTGHAMQQAAPFFSDDEDVLMLYGDVPLISVDTLQQLCAAKPQGGIGLLTVKLDDPTGYGRITRENGNVSGIVEHKDASDEQRQINEINTGILVANGADLKRWLAKLDNNNAQGEYYITDIIAMAWNEGREIAAVHPQRLSEVEGVNNRLQLARLEHVYQAEQAEKLLLAGVMLRDPARFDLRGTLQHGRDVEIDANVIIEGDVVLGNRVKIGAGCVIKNSVIGDDCEISPYSVVEDALLDTACTIGPFARLRPGAELLEGAHVGNFVEMKKARLGKGSKAGHLTYLGDAEIGDNVNIGAGTITCNYDGANKHKTIIGDDVFVGSDTQLVAPVTVAKGATIAAGTTVTRNIAENELVLTRVPQVHKQGWRRPVKKK</sequence>
<comment type="function">
    <text evidence="1">Catalyzes the last two sequential reactions in the de novo biosynthetic pathway for UDP-N-acetylglucosamine (UDP-GlcNAc). The C-terminal domain catalyzes the transfer of acetyl group from acetyl coenzyme A to glucosamine-1-phosphate (GlcN-1-P) to produce N-acetylglucosamine-1-phosphate (GlcNAc-1-P), which is converted into UDP-GlcNAc by the transfer of uridine 5-monophosphate (from uridine 5-triphosphate), a reaction catalyzed by the N-terminal domain.</text>
</comment>
<comment type="catalytic activity">
    <reaction evidence="1">
        <text>alpha-D-glucosamine 1-phosphate + acetyl-CoA = N-acetyl-alpha-D-glucosamine 1-phosphate + CoA + H(+)</text>
        <dbReference type="Rhea" id="RHEA:13725"/>
        <dbReference type="ChEBI" id="CHEBI:15378"/>
        <dbReference type="ChEBI" id="CHEBI:57287"/>
        <dbReference type="ChEBI" id="CHEBI:57288"/>
        <dbReference type="ChEBI" id="CHEBI:57776"/>
        <dbReference type="ChEBI" id="CHEBI:58516"/>
        <dbReference type="EC" id="2.3.1.157"/>
    </reaction>
</comment>
<comment type="catalytic activity">
    <reaction evidence="1">
        <text>N-acetyl-alpha-D-glucosamine 1-phosphate + UTP + H(+) = UDP-N-acetyl-alpha-D-glucosamine + diphosphate</text>
        <dbReference type="Rhea" id="RHEA:13509"/>
        <dbReference type="ChEBI" id="CHEBI:15378"/>
        <dbReference type="ChEBI" id="CHEBI:33019"/>
        <dbReference type="ChEBI" id="CHEBI:46398"/>
        <dbReference type="ChEBI" id="CHEBI:57705"/>
        <dbReference type="ChEBI" id="CHEBI:57776"/>
        <dbReference type="EC" id="2.7.7.23"/>
    </reaction>
</comment>
<comment type="cofactor">
    <cofactor evidence="1">
        <name>Mg(2+)</name>
        <dbReference type="ChEBI" id="CHEBI:18420"/>
    </cofactor>
    <text evidence="1">Binds 1 Mg(2+) ion per subunit.</text>
</comment>
<comment type="pathway">
    <text evidence="1">Nucleotide-sugar biosynthesis; UDP-N-acetyl-alpha-D-glucosamine biosynthesis; N-acetyl-alpha-D-glucosamine 1-phosphate from alpha-D-glucosamine 6-phosphate (route II): step 2/2.</text>
</comment>
<comment type="pathway">
    <text evidence="1">Nucleotide-sugar biosynthesis; UDP-N-acetyl-alpha-D-glucosamine biosynthesis; UDP-N-acetyl-alpha-D-glucosamine from N-acetyl-alpha-D-glucosamine 1-phosphate: step 1/1.</text>
</comment>
<comment type="pathway">
    <text evidence="1">Bacterial outer membrane biogenesis; LPS lipid A biosynthesis.</text>
</comment>
<comment type="subunit">
    <text evidence="1">Homotrimer.</text>
</comment>
<comment type="subcellular location">
    <subcellularLocation>
        <location evidence="1">Cytoplasm</location>
    </subcellularLocation>
</comment>
<comment type="similarity">
    <text evidence="1">In the N-terminal section; belongs to the N-acetylglucosamine-1-phosphate uridyltransferase family.</text>
</comment>
<comment type="similarity">
    <text evidence="1">In the C-terminal section; belongs to the transferase hexapeptide repeat family.</text>
</comment>
<comment type="sequence caution" evidence="2">
    <conflict type="erroneous initiation">
        <sequence resource="EMBL-CDS" id="ABU79188"/>
    </conflict>
</comment>
<organism>
    <name type="scientific">Cronobacter sakazakii (strain ATCC BAA-894)</name>
    <name type="common">Enterobacter sakazakii</name>
    <dbReference type="NCBI Taxonomy" id="290339"/>
    <lineage>
        <taxon>Bacteria</taxon>
        <taxon>Pseudomonadati</taxon>
        <taxon>Pseudomonadota</taxon>
        <taxon>Gammaproteobacteria</taxon>
        <taxon>Enterobacterales</taxon>
        <taxon>Enterobacteriaceae</taxon>
        <taxon>Cronobacter</taxon>
    </lineage>
</organism>
<reference key="1">
    <citation type="journal article" date="2010" name="PLoS ONE">
        <title>Genome sequence of Cronobacter sakazakii BAA-894 and comparative genomic hybridization analysis with other Cronobacter species.</title>
        <authorList>
            <person name="Kucerova E."/>
            <person name="Clifton S.W."/>
            <person name="Xia X.Q."/>
            <person name="Long F."/>
            <person name="Porwollik S."/>
            <person name="Fulton L."/>
            <person name="Fronick C."/>
            <person name="Minx P."/>
            <person name="Kyung K."/>
            <person name="Warren W."/>
            <person name="Fulton R."/>
            <person name="Feng D."/>
            <person name="Wollam A."/>
            <person name="Shah N."/>
            <person name="Bhonagiri V."/>
            <person name="Nash W.E."/>
            <person name="Hallsworth-Pepin K."/>
            <person name="Wilson R.K."/>
            <person name="McClelland M."/>
            <person name="Forsythe S.J."/>
        </authorList>
    </citation>
    <scope>NUCLEOTIDE SEQUENCE [LARGE SCALE GENOMIC DNA]</scope>
    <source>
        <strain>ATCC BAA-894</strain>
    </source>
</reference>
<feature type="chain" id="PRO_0000337721" description="Bifunctional protein GlmU">
    <location>
        <begin position="1"/>
        <end position="456"/>
    </location>
</feature>
<feature type="region of interest" description="Pyrophosphorylase" evidence="1">
    <location>
        <begin position="1"/>
        <end position="229"/>
    </location>
</feature>
<feature type="region of interest" description="Linker" evidence="1">
    <location>
        <begin position="230"/>
        <end position="250"/>
    </location>
</feature>
<feature type="region of interest" description="N-acetyltransferase" evidence="1">
    <location>
        <begin position="251"/>
        <end position="456"/>
    </location>
</feature>
<feature type="active site" description="Proton acceptor" evidence="1">
    <location>
        <position position="363"/>
    </location>
</feature>
<feature type="binding site" evidence="1">
    <location>
        <begin position="11"/>
        <end position="14"/>
    </location>
    <ligand>
        <name>UDP-N-acetyl-alpha-D-glucosamine</name>
        <dbReference type="ChEBI" id="CHEBI:57705"/>
    </ligand>
</feature>
<feature type="binding site" evidence="1">
    <location>
        <position position="25"/>
    </location>
    <ligand>
        <name>UDP-N-acetyl-alpha-D-glucosamine</name>
        <dbReference type="ChEBI" id="CHEBI:57705"/>
    </ligand>
</feature>
<feature type="binding site" evidence="1">
    <location>
        <position position="76"/>
    </location>
    <ligand>
        <name>UDP-N-acetyl-alpha-D-glucosamine</name>
        <dbReference type="ChEBI" id="CHEBI:57705"/>
    </ligand>
</feature>
<feature type="binding site" evidence="1">
    <location>
        <begin position="81"/>
        <end position="82"/>
    </location>
    <ligand>
        <name>UDP-N-acetyl-alpha-D-glucosamine</name>
        <dbReference type="ChEBI" id="CHEBI:57705"/>
    </ligand>
</feature>
<feature type="binding site" evidence="1">
    <location>
        <begin position="103"/>
        <end position="105"/>
    </location>
    <ligand>
        <name>UDP-N-acetyl-alpha-D-glucosamine</name>
        <dbReference type="ChEBI" id="CHEBI:57705"/>
    </ligand>
</feature>
<feature type="binding site" evidence="1">
    <location>
        <position position="105"/>
    </location>
    <ligand>
        <name>Mg(2+)</name>
        <dbReference type="ChEBI" id="CHEBI:18420"/>
    </ligand>
</feature>
<feature type="binding site" evidence="1">
    <location>
        <position position="140"/>
    </location>
    <ligand>
        <name>UDP-N-acetyl-alpha-D-glucosamine</name>
        <dbReference type="ChEBI" id="CHEBI:57705"/>
    </ligand>
</feature>
<feature type="binding site" evidence="1">
    <location>
        <position position="154"/>
    </location>
    <ligand>
        <name>UDP-N-acetyl-alpha-D-glucosamine</name>
        <dbReference type="ChEBI" id="CHEBI:57705"/>
    </ligand>
</feature>
<feature type="binding site" evidence="1">
    <location>
        <position position="169"/>
    </location>
    <ligand>
        <name>UDP-N-acetyl-alpha-D-glucosamine</name>
        <dbReference type="ChEBI" id="CHEBI:57705"/>
    </ligand>
</feature>
<feature type="binding site" evidence="1">
    <location>
        <position position="227"/>
    </location>
    <ligand>
        <name>Mg(2+)</name>
        <dbReference type="ChEBI" id="CHEBI:18420"/>
    </ligand>
</feature>
<feature type="binding site" evidence="1">
    <location>
        <position position="227"/>
    </location>
    <ligand>
        <name>UDP-N-acetyl-alpha-D-glucosamine</name>
        <dbReference type="ChEBI" id="CHEBI:57705"/>
    </ligand>
</feature>
<feature type="binding site" evidence="1">
    <location>
        <position position="333"/>
    </location>
    <ligand>
        <name>UDP-N-acetyl-alpha-D-glucosamine</name>
        <dbReference type="ChEBI" id="CHEBI:57705"/>
    </ligand>
</feature>
<feature type="binding site" evidence="1">
    <location>
        <position position="351"/>
    </location>
    <ligand>
        <name>UDP-N-acetyl-alpha-D-glucosamine</name>
        <dbReference type="ChEBI" id="CHEBI:57705"/>
    </ligand>
</feature>
<feature type="binding site" evidence="1">
    <location>
        <position position="366"/>
    </location>
    <ligand>
        <name>UDP-N-acetyl-alpha-D-glucosamine</name>
        <dbReference type="ChEBI" id="CHEBI:57705"/>
    </ligand>
</feature>
<feature type="binding site" evidence="1">
    <location>
        <position position="377"/>
    </location>
    <ligand>
        <name>UDP-N-acetyl-alpha-D-glucosamine</name>
        <dbReference type="ChEBI" id="CHEBI:57705"/>
    </ligand>
</feature>
<feature type="binding site" evidence="1">
    <location>
        <position position="380"/>
    </location>
    <ligand>
        <name>acetyl-CoA</name>
        <dbReference type="ChEBI" id="CHEBI:57288"/>
    </ligand>
</feature>
<feature type="binding site" evidence="1">
    <location>
        <begin position="386"/>
        <end position="387"/>
    </location>
    <ligand>
        <name>acetyl-CoA</name>
        <dbReference type="ChEBI" id="CHEBI:57288"/>
    </ligand>
</feature>
<feature type="binding site" evidence="1">
    <location>
        <position position="405"/>
    </location>
    <ligand>
        <name>acetyl-CoA</name>
        <dbReference type="ChEBI" id="CHEBI:57288"/>
    </ligand>
</feature>
<feature type="binding site" evidence="1">
    <location>
        <position position="423"/>
    </location>
    <ligand>
        <name>acetyl-CoA</name>
        <dbReference type="ChEBI" id="CHEBI:57288"/>
    </ligand>
</feature>
<feature type="binding site" evidence="1">
    <location>
        <position position="440"/>
    </location>
    <ligand>
        <name>acetyl-CoA</name>
        <dbReference type="ChEBI" id="CHEBI:57288"/>
    </ligand>
</feature>
<name>GLMU_CROS8</name>
<gene>
    <name evidence="1" type="primary">glmU</name>
    <name type="ordered locus">ESA_04002</name>
</gene>
<evidence type="ECO:0000255" key="1">
    <source>
        <dbReference type="HAMAP-Rule" id="MF_01631"/>
    </source>
</evidence>
<evidence type="ECO:0000305" key="2"/>
<protein>
    <recommendedName>
        <fullName evidence="1">Bifunctional protein GlmU</fullName>
    </recommendedName>
    <domain>
        <recommendedName>
            <fullName evidence="1">UDP-N-acetylglucosamine pyrophosphorylase</fullName>
            <ecNumber evidence="1">2.7.7.23</ecNumber>
        </recommendedName>
        <alternativeName>
            <fullName evidence="1">N-acetylglucosamine-1-phosphate uridyltransferase</fullName>
        </alternativeName>
    </domain>
    <domain>
        <recommendedName>
            <fullName evidence="1">Glucosamine-1-phosphate N-acetyltransferase</fullName>
            <ecNumber evidence="1">2.3.1.157</ecNumber>
        </recommendedName>
    </domain>
</protein>
<keyword id="KW-0012">Acyltransferase</keyword>
<keyword id="KW-0133">Cell shape</keyword>
<keyword id="KW-0961">Cell wall biogenesis/degradation</keyword>
<keyword id="KW-0963">Cytoplasm</keyword>
<keyword id="KW-0460">Magnesium</keyword>
<keyword id="KW-0479">Metal-binding</keyword>
<keyword id="KW-0511">Multifunctional enzyme</keyword>
<keyword id="KW-0548">Nucleotidyltransferase</keyword>
<keyword id="KW-0573">Peptidoglycan synthesis</keyword>
<keyword id="KW-1185">Reference proteome</keyword>
<keyword id="KW-0677">Repeat</keyword>
<keyword id="KW-0808">Transferase</keyword>